<organism>
    <name type="scientific">Bacillus subtilis (strain 168)</name>
    <dbReference type="NCBI Taxonomy" id="224308"/>
    <lineage>
        <taxon>Bacteria</taxon>
        <taxon>Bacillati</taxon>
        <taxon>Bacillota</taxon>
        <taxon>Bacilli</taxon>
        <taxon>Bacillales</taxon>
        <taxon>Bacillaceae</taxon>
        <taxon>Bacillus</taxon>
    </lineage>
</organism>
<name>BIOYB_BACSU</name>
<keyword id="KW-1003">Cell membrane</keyword>
<keyword id="KW-0472">Membrane</keyword>
<keyword id="KW-1185">Reference proteome</keyword>
<keyword id="KW-0812">Transmembrane</keyword>
<keyword id="KW-1133">Transmembrane helix</keyword>
<keyword id="KW-0813">Transport</keyword>
<sequence length="200" mass="21538">MKQRKLRAGDMALIGMFAALMAVGANITSVAPFLQVAGIPLSMQPFFCLLAALLLGSKRAAIAMIVYALVGLAGAPVFAQFSAGFAPFAGKSGGFIISYIPAAFAAGWFLERNIQPSKIRFLIASLIGTAIMYLIGTTYMYLALKLWIHTPVSYGTAWGFMIWFMVKDTALAVILSFIAPAIYRSIHKATGFNRNHISST</sequence>
<proteinExistence type="inferred from homology"/>
<accession>O32104</accession>
<dbReference type="EMBL" id="AL009126">
    <property type="protein sequence ID" value="CAB15193.1"/>
    <property type="molecule type" value="Genomic_DNA"/>
</dbReference>
<dbReference type="PIR" id="H70012">
    <property type="entry name" value="H70012"/>
</dbReference>
<dbReference type="RefSeq" id="NP_391083.1">
    <property type="nucleotide sequence ID" value="NC_000964.3"/>
</dbReference>
<dbReference type="RefSeq" id="WP_003228737.1">
    <property type="nucleotide sequence ID" value="NZ_OZ025638.1"/>
</dbReference>
<dbReference type="SMR" id="O32104"/>
<dbReference type="FunCoup" id="O32104">
    <property type="interactions" value="164"/>
</dbReference>
<dbReference type="STRING" id="224308.BSU32030"/>
<dbReference type="PaxDb" id="224308-BSU32030"/>
<dbReference type="EnsemblBacteria" id="CAB15193">
    <property type="protein sequence ID" value="CAB15193"/>
    <property type="gene ID" value="BSU_32030"/>
</dbReference>
<dbReference type="GeneID" id="936511"/>
<dbReference type="KEGG" id="bsu:BSU32030"/>
<dbReference type="PATRIC" id="fig|224308.179.peg.3469"/>
<dbReference type="eggNOG" id="COG1268">
    <property type="taxonomic scope" value="Bacteria"/>
</dbReference>
<dbReference type="InParanoid" id="O32104"/>
<dbReference type="OrthoDB" id="9803495at2"/>
<dbReference type="PhylomeDB" id="O32104"/>
<dbReference type="BioCyc" id="BSUB:BSU32030-MONOMER"/>
<dbReference type="Proteomes" id="UP000001570">
    <property type="component" value="Chromosome"/>
</dbReference>
<dbReference type="GO" id="GO:0005886">
    <property type="term" value="C:plasma membrane"/>
    <property type="evidence" value="ECO:0007669"/>
    <property type="project" value="UniProtKB-SubCell"/>
</dbReference>
<dbReference type="GO" id="GO:0015225">
    <property type="term" value="F:biotin transmembrane transporter activity"/>
    <property type="evidence" value="ECO:0007669"/>
    <property type="project" value="InterPro"/>
</dbReference>
<dbReference type="Gene3D" id="1.10.1760.20">
    <property type="match status" value="1"/>
</dbReference>
<dbReference type="InterPro" id="IPR003784">
    <property type="entry name" value="BioY"/>
</dbReference>
<dbReference type="PANTHER" id="PTHR34295">
    <property type="entry name" value="BIOTIN TRANSPORTER BIOY"/>
    <property type="match status" value="1"/>
</dbReference>
<dbReference type="PANTHER" id="PTHR34295:SF1">
    <property type="entry name" value="BIOTIN TRANSPORTER BIOY"/>
    <property type="match status" value="1"/>
</dbReference>
<dbReference type="Pfam" id="PF02632">
    <property type="entry name" value="BioY"/>
    <property type="match status" value="1"/>
</dbReference>
<dbReference type="PIRSF" id="PIRSF016661">
    <property type="entry name" value="BioY"/>
    <property type="match status" value="1"/>
</dbReference>
<reference key="1">
    <citation type="journal article" date="1997" name="Nature">
        <title>The complete genome sequence of the Gram-positive bacterium Bacillus subtilis.</title>
        <authorList>
            <person name="Kunst F."/>
            <person name="Ogasawara N."/>
            <person name="Moszer I."/>
            <person name="Albertini A.M."/>
            <person name="Alloni G."/>
            <person name="Azevedo V."/>
            <person name="Bertero M.G."/>
            <person name="Bessieres P."/>
            <person name="Bolotin A."/>
            <person name="Borchert S."/>
            <person name="Borriss R."/>
            <person name="Boursier L."/>
            <person name="Brans A."/>
            <person name="Braun M."/>
            <person name="Brignell S.C."/>
            <person name="Bron S."/>
            <person name="Brouillet S."/>
            <person name="Bruschi C.V."/>
            <person name="Caldwell B."/>
            <person name="Capuano V."/>
            <person name="Carter N.M."/>
            <person name="Choi S.-K."/>
            <person name="Codani J.-J."/>
            <person name="Connerton I.F."/>
            <person name="Cummings N.J."/>
            <person name="Daniel R.A."/>
            <person name="Denizot F."/>
            <person name="Devine K.M."/>
            <person name="Duesterhoeft A."/>
            <person name="Ehrlich S.D."/>
            <person name="Emmerson P.T."/>
            <person name="Entian K.-D."/>
            <person name="Errington J."/>
            <person name="Fabret C."/>
            <person name="Ferrari E."/>
            <person name="Foulger D."/>
            <person name="Fritz C."/>
            <person name="Fujita M."/>
            <person name="Fujita Y."/>
            <person name="Fuma S."/>
            <person name="Galizzi A."/>
            <person name="Galleron N."/>
            <person name="Ghim S.-Y."/>
            <person name="Glaser P."/>
            <person name="Goffeau A."/>
            <person name="Golightly E.J."/>
            <person name="Grandi G."/>
            <person name="Guiseppi G."/>
            <person name="Guy B.J."/>
            <person name="Haga K."/>
            <person name="Haiech J."/>
            <person name="Harwood C.R."/>
            <person name="Henaut A."/>
            <person name="Hilbert H."/>
            <person name="Holsappel S."/>
            <person name="Hosono S."/>
            <person name="Hullo M.-F."/>
            <person name="Itaya M."/>
            <person name="Jones L.-M."/>
            <person name="Joris B."/>
            <person name="Karamata D."/>
            <person name="Kasahara Y."/>
            <person name="Klaerr-Blanchard M."/>
            <person name="Klein C."/>
            <person name="Kobayashi Y."/>
            <person name="Koetter P."/>
            <person name="Koningstein G."/>
            <person name="Krogh S."/>
            <person name="Kumano M."/>
            <person name="Kurita K."/>
            <person name="Lapidus A."/>
            <person name="Lardinois S."/>
            <person name="Lauber J."/>
            <person name="Lazarevic V."/>
            <person name="Lee S.-M."/>
            <person name="Levine A."/>
            <person name="Liu H."/>
            <person name="Masuda S."/>
            <person name="Mauel C."/>
            <person name="Medigue C."/>
            <person name="Medina N."/>
            <person name="Mellado R.P."/>
            <person name="Mizuno M."/>
            <person name="Moestl D."/>
            <person name="Nakai S."/>
            <person name="Noback M."/>
            <person name="Noone D."/>
            <person name="O'Reilly M."/>
            <person name="Ogawa K."/>
            <person name="Ogiwara A."/>
            <person name="Oudega B."/>
            <person name="Park S.-H."/>
            <person name="Parro V."/>
            <person name="Pohl T.M."/>
            <person name="Portetelle D."/>
            <person name="Porwollik S."/>
            <person name="Prescott A.M."/>
            <person name="Presecan E."/>
            <person name="Pujic P."/>
            <person name="Purnelle B."/>
            <person name="Rapoport G."/>
            <person name="Rey M."/>
            <person name="Reynolds S."/>
            <person name="Rieger M."/>
            <person name="Rivolta C."/>
            <person name="Rocha E."/>
            <person name="Roche B."/>
            <person name="Rose M."/>
            <person name="Sadaie Y."/>
            <person name="Sato T."/>
            <person name="Scanlan E."/>
            <person name="Schleich S."/>
            <person name="Schroeter R."/>
            <person name="Scoffone F."/>
            <person name="Sekiguchi J."/>
            <person name="Sekowska A."/>
            <person name="Seror S.J."/>
            <person name="Serror P."/>
            <person name="Shin B.-S."/>
            <person name="Soldo B."/>
            <person name="Sorokin A."/>
            <person name="Tacconi E."/>
            <person name="Takagi T."/>
            <person name="Takahashi H."/>
            <person name="Takemaru K."/>
            <person name="Takeuchi M."/>
            <person name="Tamakoshi A."/>
            <person name="Tanaka T."/>
            <person name="Terpstra P."/>
            <person name="Tognoni A."/>
            <person name="Tosato V."/>
            <person name="Uchiyama S."/>
            <person name="Vandenbol M."/>
            <person name="Vannier F."/>
            <person name="Vassarotti A."/>
            <person name="Viari A."/>
            <person name="Wambutt R."/>
            <person name="Wedler E."/>
            <person name="Wedler H."/>
            <person name="Weitzenegger T."/>
            <person name="Winters P."/>
            <person name="Wipat A."/>
            <person name="Yamamoto H."/>
            <person name="Yamane K."/>
            <person name="Yasumoto K."/>
            <person name="Yata K."/>
            <person name="Yoshida K."/>
            <person name="Yoshikawa H.-F."/>
            <person name="Zumstein E."/>
            <person name="Yoshikawa H."/>
            <person name="Danchin A."/>
        </authorList>
    </citation>
    <scope>NUCLEOTIDE SEQUENCE [LARGE SCALE GENOMIC DNA]</scope>
    <source>
        <strain>168</strain>
    </source>
</reference>
<gene>
    <name type="primary">bioYB</name>
    <name type="synonym">yuiG</name>
    <name type="ordered locus">BSU32030</name>
</gene>
<protein>
    <recommendedName>
        <fullName>Putative biotin transporter BioYB</fullName>
    </recommendedName>
</protein>
<evidence type="ECO:0000250" key="1"/>
<evidence type="ECO:0000255" key="2"/>
<evidence type="ECO:0000305" key="3"/>
<comment type="function">
    <text evidence="1">Putative biotin transporter.</text>
</comment>
<comment type="subcellular location">
    <subcellularLocation>
        <location evidence="3">Cell membrane</location>
        <topology evidence="3">Multi-pass membrane protein</topology>
    </subcellularLocation>
</comment>
<comment type="similarity">
    <text evidence="3">Belongs to the BioY family.</text>
</comment>
<feature type="chain" id="PRO_0000389649" description="Putative biotin transporter BioYB">
    <location>
        <begin position="1"/>
        <end position="200"/>
    </location>
</feature>
<feature type="transmembrane region" description="Helical" evidence="2">
    <location>
        <begin position="13"/>
        <end position="33"/>
    </location>
</feature>
<feature type="transmembrane region" description="Helical" evidence="2">
    <location>
        <begin position="36"/>
        <end position="56"/>
    </location>
</feature>
<feature type="transmembrane region" description="Helical" evidence="2">
    <location>
        <begin position="61"/>
        <end position="81"/>
    </location>
</feature>
<feature type="transmembrane region" description="Helical" evidence="2">
    <location>
        <begin position="90"/>
        <end position="110"/>
    </location>
</feature>
<feature type="transmembrane region" description="Helical" evidence="2">
    <location>
        <begin position="121"/>
        <end position="141"/>
    </location>
</feature>
<feature type="transmembrane region" description="Helical" evidence="2">
    <location>
        <begin position="158"/>
        <end position="178"/>
    </location>
</feature>